<comment type="catalytic activity">
    <reaction>
        <text>Random endo-hydrolysis of N-acetyl-beta-D-glucosaminide (1-&gt;4)-beta-linkages in chitin and chitodextrins.</text>
        <dbReference type="EC" id="3.2.1.14"/>
    </reaction>
</comment>
<comment type="induction">
    <text>By chitin.</text>
</comment>
<comment type="similarity">
    <text evidence="6">Belongs to the glycosyl hydrolase 18 family. Chitinase class II subfamily.</text>
</comment>
<accession>P11220</accession>
<gene>
    <name type="primary">chtA</name>
</gene>
<reference key="1">
    <citation type="journal article" date="1992" name="Gene">
        <title>Cloning and high-level expression of chitinase-encoding gene of Streptomyces plicatus.</title>
        <authorList>
            <person name="Robbins P.W."/>
            <person name="Overbye K."/>
            <person name="Albright C."/>
            <person name="Benfield B."/>
            <person name="Pero J."/>
        </authorList>
    </citation>
    <scope>NUCLEOTIDE SEQUENCE [GENOMIC DNA]</scope>
</reference>
<reference key="2">
    <citation type="journal article" date="1988" name="J. Biol. Chem.">
        <title>Cloning and expression of a Streptomyces plicatus chitinase (chitinase-63) in Escherichia coli.</title>
        <authorList>
            <person name="Robbins P.W."/>
            <person name="Albright C."/>
            <person name="Benfield B."/>
        </authorList>
    </citation>
    <scope>NUCLEOTIDE SEQUENCE [GENOMIC DNA] OF 1-45</scope>
    <scope>PROTEIN SEQUENCE OF 31-45</scope>
</reference>
<feature type="signal peptide" evidence="5">
    <location>
        <begin position="1"/>
        <end position="30"/>
    </location>
</feature>
<feature type="chain" id="PRO_0000011912" description="Chitinase 63">
    <location>
        <begin position="31"/>
        <end position="610"/>
    </location>
</feature>
<feature type="domain" description="CBM2" evidence="2">
    <location>
        <begin position="31"/>
        <end position="134"/>
    </location>
</feature>
<feature type="domain" description="Fibronectin type-III" evidence="1">
    <location>
        <begin position="144"/>
        <end position="229"/>
    </location>
</feature>
<feature type="domain" description="GH18" evidence="3">
    <location>
        <begin position="241"/>
        <end position="610"/>
    </location>
</feature>
<feature type="region of interest" description="Disordered" evidence="4">
    <location>
        <begin position="125"/>
        <end position="153"/>
    </location>
</feature>
<feature type="region of interest" description="Disordered" evidence="4">
    <location>
        <begin position="208"/>
        <end position="239"/>
    </location>
</feature>
<feature type="compositionally biased region" description="Polar residues" evidence="4">
    <location>
        <begin position="213"/>
        <end position="224"/>
    </location>
</feature>
<feature type="active site" description="Proton donor" evidence="3">
    <location>
        <position position="383"/>
    </location>
</feature>
<feature type="binding site" evidence="3">
    <location>
        <begin position="313"/>
        <end position="314"/>
    </location>
    <ligand>
        <name>chitin</name>
        <dbReference type="ChEBI" id="CHEBI:17029"/>
    </ligand>
</feature>
<feature type="binding site" evidence="3">
    <location>
        <begin position="340"/>
        <end position="343"/>
    </location>
    <ligand>
        <name>chitin</name>
        <dbReference type="ChEBI" id="CHEBI:17029"/>
    </ligand>
</feature>
<feature type="binding site" evidence="3">
    <location>
        <position position="384"/>
    </location>
    <ligand>
        <name>chitin</name>
        <dbReference type="ChEBI" id="CHEBI:17029"/>
    </ligand>
</feature>
<feature type="binding site" evidence="3">
    <location>
        <begin position="450"/>
        <end position="453"/>
    </location>
    <ligand>
        <name>chitin</name>
        <dbReference type="ChEBI" id="CHEBI:17029"/>
    </ligand>
</feature>
<feature type="binding site" evidence="3">
    <location>
        <position position="590"/>
    </location>
    <ligand>
        <name>chitin</name>
        <dbReference type="ChEBI" id="CHEBI:17029"/>
    </ligand>
</feature>
<feature type="sequence conflict" description="In Ref. 2; AAA26717." evidence="6" ref="2">
    <original>F</original>
    <variation>I</variation>
    <location>
        <position position="3"/>
    </location>
</feature>
<protein>
    <recommendedName>
        <fullName>Chitinase 63</fullName>
        <ecNumber>3.2.1.14</ecNumber>
    </recommendedName>
</protein>
<evidence type="ECO:0000255" key="1">
    <source>
        <dbReference type="PROSITE-ProRule" id="PRU00316"/>
    </source>
</evidence>
<evidence type="ECO:0000255" key="2">
    <source>
        <dbReference type="PROSITE-ProRule" id="PRU01135"/>
    </source>
</evidence>
<evidence type="ECO:0000255" key="3">
    <source>
        <dbReference type="PROSITE-ProRule" id="PRU01258"/>
    </source>
</evidence>
<evidence type="ECO:0000256" key="4">
    <source>
        <dbReference type="SAM" id="MobiDB-lite"/>
    </source>
</evidence>
<evidence type="ECO:0000269" key="5">
    <source>
    </source>
</evidence>
<evidence type="ECO:0000305" key="6"/>
<name>CHIT_STRPL</name>
<dbReference type="EC" id="3.2.1.14"/>
<dbReference type="EMBL" id="M82804">
    <property type="protein sequence ID" value="AAA26720.1"/>
    <property type="molecule type" value="Genomic_DNA"/>
</dbReference>
<dbReference type="EMBL" id="M18397">
    <property type="protein sequence ID" value="AAA26717.1"/>
    <property type="molecule type" value="Genomic_DNA"/>
</dbReference>
<dbReference type="PIR" id="JH0573">
    <property type="entry name" value="JH0573"/>
</dbReference>
<dbReference type="SMR" id="P11220"/>
<dbReference type="CAZy" id="CBM2">
    <property type="family name" value="Carbohydrate-Binding Module Family 2"/>
</dbReference>
<dbReference type="CAZy" id="GH18">
    <property type="family name" value="Glycoside Hydrolase Family 18"/>
</dbReference>
<dbReference type="GO" id="GO:0008061">
    <property type="term" value="F:chitin binding"/>
    <property type="evidence" value="ECO:0007669"/>
    <property type="project" value="UniProtKB-KW"/>
</dbReference>
<dbReference type="GO" id="GO:0008843">
    <property type="term" value="F:endochitinase activity"/>
    <property type="evidence" value="ECO:0007669"/>
    <property type="project" value="UniProtKB-EC"/>
</dbReference>
<dbReference type="GO" id="GO:0030247">
    <property type="term" value="F:polysaccharide binding"/>
    <property type="evidence" value="ECO:0007669"/>
    <property type="project" value="InterPro"/>
</dbReference>
<dbReference type="GO" id="GO:0006032">
    <property type="term" value="P:chitin catabolic process"/>
    <property type="evidence" value="ECO:0007669"/>
    <property type="project" value="UniProtKB-KW"/>
</dbReference>
<dbReference type="GO" id="GO:0000272">
    <property type="term" value="P:polysaccharide catabolic process"/>
    <property type="evidence" value="ECO:0007669"/>
    <property type="project" value="UniProtKB-KW"/>
</dbReference>
<dbReference type="CDD" id="cd00063">
    <property type="entry name" value="FN3"/>
    <property type="match status" value="1"/>
</dbReference>
<dbReference type="CDD" id="cd06548">
    <property type="entry name" value="GH18_chitinase"/>
    <property type="match status" value="1"/>
</dbReference>
<dbReference type="Gene3D" id="2.60.40.290">
    <property type="match status" value="1"/>
</dbReference>
<dbReference type="Gene3D" id="3.10.50.10">
    <property type="match status" value="1"/>
</dbReference>
<dbReference type="Gene3D" id="3.20.20.80">
    <property type="entry name" value="Glycosidases"/>
    <property type="match status" value="1"/>
</dbReference>
<dbReference type="Gene3D" id="2.60.40.10">
    <property type="entry name" value="Immunoglobulins"/>
    <property type="match status" value="1"/>
</dbReference>
<dbReference type="InterPro" id="IPR001919">
    <property type="entry name" value="CBD2"/>
</dbReference>
<dbReference type="InterPro" id="IPR008965">
    <property type="entry name" value="CBM2/CBM3_carb-bd_dom_sf"/>
</dbReference>
<dbReference type="InterPro" id="IPR012291">
    <property type="entry name" value="CBM2_carb-bd_dom_sf"/>
</dbReference>
<dbReference type="InterPro" id="IPR018366">
    <property type="entry name" value="CBM2_CS"/>
</dbReference>
<dbReference type="InterPro" id="IPR011583">
    <property type="entry name" value="Chitinase_II/V-like_cat"/>
</dbReference>
<dbReference type="InterPro" id="IPR029070">
    <property type="entry name" value="Chitinase_insertion_sf"/>
</dbReference>
<dbReference type="InterPro" id="IPR003961">
    <property type="entry name" value="FN3_dom"/>
</dbReference>
<dbReference type="InterPro" id="IPR036116">
    <property type="entry name" value="FN3_sf"/>
</dbReference>
<dbReference type="InterPro" id="IPR001223">
    <property type="entry name" value="Glyco_hydro18_cat"/>
</dbReference>
<dbReference type="InterPro" id="IPR001579">
    <property type="entry name" value="Glyco_hydro_18_chit_AS"/>
</dbReference>
<dbReference type="InterPro" id="IPR017853">
    <property type="entry name" value="Glycoside_hydrolase_SF"/>
</dbReference>
<dbReference type="InterPro" id="IPR050314">
    <property type="entry name" value="Glycosyl_Hydrlase_18"/>
</dbReference>
<dbReference type="InterPro" id="IPR013783">
    <property type="entry name" value="Ig-like_fold"/>
</dbReference>
<dbReference type="PANTHER" id="PTHR11177">
    <property type="entry name" value="CHITINASE"/>
    <property type="match status" value="1"/>
</dbReference>
<dbReference type="PANTHER" id="PTHR11177:SF317">
    <property type="entry name" value="CHITINASE 12-RELATED"/>
    <property type="match status" value="1"/>
</dbReference>
<dbReference type="Pfam" id="PF00553">
    <property type="entry name" value="CBM_2"/>
    <property type="match status" value="1"/>
</dbReference>
<dbReference type="Pfam" id="PF00041">
    <property type="entry name" value="fn3"/>
    <property type="match status" value="1"/>
</dbReference>
<dbReference type="Pfam" id="PF00704">
    <property type="entry name" value="Glyco_hydro_18"/>
    <property type="match status" value="1"/>
</dbReference>
<dbReference type="SMART" id="SM00637">
    <property type="entry name" value="CBD_II"/>
    <property type="match status" value="1"/>
</dbReference>
<dbReference type="SMART" id="SM00060">
    <property type="entry name" value="FN3"/>
    <property type="match status" value="1"/>
</dbReference>
<dbReference type="SMART" id="SM00636">
    <property type="entry name" value="Glyco_18"/>
    <property type="match status" value="1"/>
</dbReference>
<dbReference type="SUPFAM" id="SSF51445">
    <property type="entry name" value="(Trans)glycosidases"/>
    <property type="match status" value="1"/>
</dbReference>
<dbReference type="SUPFAM" id="SSF49384">
    <property type="entry name" value="Carbohydrate-binding domain"/>
    <property type="match status" value="1"/>
</dbReference>
<dbReference type="SUPFAM" id="SSF54556">
    <property type="entry name" value="Chitinase insertion domain"/>
    <property type="match status" value="1"/>
</dbReference>
<dbReference type="SUPFAM" id="SSF49265">
    <property type="entry name" value="Fibronectin type III"/>
    <property type="match status" value="1"/>
</dbReference>
<dbReference type="PROSITE" id="PS51173">
    <property type="entry name" value="CBM2"/>
    <property type="match status" value="1"/>
</dbReference>
<dbReference type="PROSITE" id="PS00561">
    <property type="entry name" value="CBM2_A"/>
    <property type="match status" value="1"/>
</dbReference>
<dbReference type="PROSITE" id="PS00018">
    <property type="entry name" value="EF_HAND_1"/>
    <property type="match status" value="1"/>
</dbReference>
<dbReference type="PROSITE" id="PS50853">
    <property type="entry name" value="FN3"/>
    <property type="match status" value="1"/>
</dbReference>
<dbReference type="PROSITE" id="PS01095">
    <property type="entry name" value="GH18_1"/>
    <property type="match status" value="1"/>
</dbReference>
<dbReference type="PROSITE" id="PS51910">
    <property type="entry name" value="GH18_2"/>
    <property type="match status" value="1"/>
</dbReference>
<organism>
    <name type="scientific">Streptomyces plicatus</name>
    <dbReference type="NCBI Taxonomy" id="1922"/>
    <lineage>
        <taxon>Bacteria</taxon>
        <taxon>Bacillati</taxon>
        <taxon>Actinomycetota</taxon>
        <taxon>Actinomycetes</taxon>
        <taxon>Kitasatosporales</taxon>
        <taxon>Streptomycetaceae</taxon>
        <taxon>Streptomyces</taxon>
        <taxon>Streptomyces rochei group</taxon>
    </lineage>
</organism>
<sequence>MRFRHKAAALAATLALPLAGLVGLASPAQAATSATATFQKTSDWGTGFGGKWTVKNTGTTSLSSWTVEWDFPSGTKVTSAWDATVTNSADHWTAKNVGWNGTLAPGASVSFGFNGSGPGSPSGCKINGGSCDGSSVPGDEAPSAPGTPTASNITDTSVKLSWSAATDDKGVKNYDVLRDGATVATVTGTTYTDNGLTKGTDYSYSVKARDTGDQTGPASGSVKVTTTGGDGGEPNPNPGAEVKMGYFTNWGVYGRNYHVKNLVTSGSAEKITHINLRFGNVQGGKCTIGDAYADYDKAYTADQSVDGVADTWDQPLRANFNQLRNLKAEYPHIKILYSFGGWTWSGGFPDAVKNPAAFAKSCHDLVEDPRWADVFDGIDLDWEYPNACGLSCDETSAPNAFSSMMKAMRAEFGQDYLITAAVTADGSDGGKIDAADYGEASKYIDWYNVMTYDFFGAWAKNGPTAPHSPLNAYDGIPQQGFTTADAMAKFKSKGVPADKLLIGIGFYGRGWTGVTQSAPGGTATGPAAGTYEAGIEDYKVLKNSCPATGTVAGTAYAHCGTNWWSYDTPATIKSKMDWAEQQGLGGAFFWEFSGDTTNGELVSAIDSGLK</sequence>
<proteinExistence type="evidence at protein level"/>
<keyword id="KW-0119">Carbohydrate metabolism</keyword>
<keyword id="KW-0146">Chitin degradation</keyword>
<keyword id="KW-0147">Chitin-binding</keyword>
<keyword id="KW-0903">Direct protein sequencing</keyword>
<keyword id="KW-0326">Glycosidase</keyword>
<keyword id="KW-0378">Hydrolase</keyword>
<keyword id="KW-0624">Polysaccharide degradation</keyword>
<keyword id="KW-0732">Signal</keyword>